<name>RS19_THESQ</name>
<reference key="1">
    <citation type="journal article" date="2011" name="J. Bacteriol.">
        <title>Genome sequence of Thermotoga sp. strain RQ2, a hyperthermophilic bacterium isolated from a geothermally heated region of the seafloor near Ribeira Quente, the Azores.</title>
        <authorList>
            <person name="Swithers K.S."/>
            <person name="DiPippo J.L."/>
            <person name="Bruce D.C."/>
            <person name="Detter C."/>
            <person name="Tapia R."/>
            <person name="Han S."/>
            <person name="Saunders E."/>
            <person name="Goodwin L.A."/>
            <person name="Han J."/>
            <person name="Woyke T."/>
            <person name="Pitluck S."/>
            <person name="Pennacchio L."/>
            <person name="Nolan M."/>
            <person name="Mikhailova N."/>
            <person name="Lykidis A."/>
            <person name="Land M.L."/>
            <person name="Brettin T."/>
            <person name="Stetter K.O."/>
            <person name="Nelson K.E."/>
            <person name="Gogarten J.P."/>
            <person name="Noll K.M."/>
        </authorList>
    </citation>
    <scope>NUCLEOTIDE SEQUENCE [LARGE SCALE GENOMIC DNA]</scope>
    <source>
        <strain>RQ2</strain>
    </source>
</reference>
<protein>
    <recommendedName>
        <fullName evidence="1">Small ribosomal subunit protein uS19</fullName>
    </recommendedName>
    <alternativeName>
        <fullName evidence="2">30S ribosomal protein S19</fullName>
    </alternativeName>
</protein>
<gene>
    <name evidence="1" type="primary">rpsS</name>
    <name type="ordered locus">TRQ2_1390</name>
</gene>
<keyword id="KW-0687">Ribonucleoprotein</keyword>
<keyword id="KW-0689">Ribosomal protein</keyword>
<keyword id="KW-0694">RNA-binding</keyword>
<keyword id="KW-0699">rRNA-binding</keyword>
<accession>B1LBN6</accession>
<proteinExistence type="inferred from homology"/>
<evidence type="ECO:0000255" key="1">
    <source>
        <dbReference type="HAMAP-Rule" id="MF_00531"/>
    </source>
</evidence>
<evidence type="ECO:0000305" key="2"/>
<feature type="chain" id="PRO_1000128051" description="Small ribosomal subunit protein uS19">
    <location>
        <begin position="1"/>
        <end position="95"/>
    </location>
</feature>
<dbReference type="EMBL" id="CP000969">
    <property type="protein sequence ID" value="ACB09734.1"/>
    <property type="molecule type" value="Genomic_DNA"/>
</dbReference>
<dbReference type="RefSeq" id="WP_008194997.1">
    <property type="nucleotide sequence ID" value="NC_010483.1"/>
</dbReference>
<dbReference type="SMR" id="B1LBN6"/>
<dbReference type="KEGG" id="trq:TRQ2_1390"/>
<dbReference type="HOGENOM" id="CLU_144911_0_1_0"/>
<dbReference type="Proteomes" id="UP000001687">
    <property type="component" value="Chromosome"/>
</dbReference>
<dbReference type="GO" id="GO:0005737">
    <property type="term" value="C:cytoplasm"/>
    <property type="evidence" value="ECO:0007669"/>
    <property type="project" value="UniProtKB-ARBA"/>
</dbReference>
<dbReference type="GO" id="GO:0015935">
    <property type="term" value="C:small ribosomal subunit"/>
    <property type="evidence" value="ECO:0007669"/>
    <property type="project" value="InterPro"/>
</dbReference>
<dbReference type="GO" id="GO:0019843">
    <property type="term" value="F:rRNA binding"/>
    <property type="evidence" value="ECO:0007669"/>
    <property type="project" value="UniProtKB-UniRule"/>
</dbReference>
<dbReference type="GO" id="GO:0003735">
    <property type="term" value="F:structural constituent of ribosome"/>
    <property type="evidence" value="ECO:0007669"/>
    <property type="project" value="InterPro"/>
</dbReference>
<dbReference type="GO" id="GO:0000028">
    <property type="term" value="P:ribosomal small subunit assembly"/>
    <property type="evidence" value="ECO:0007669"/>
    <property type="project" value="TreeGrafter"/>
</dbReference>
<dbReference type="GO" id="GO:0006412">
    <property type="term" value="P:translation"/>
    <property type="evidence" value="ECO:0007669"/>
    <property type="project" value="UniProtKB-UniRule"/>
</dbReference>
<dbReference type="FunFam" id="3.30.860.10:FF:000001">
    <property type="entry name" value="30S ribosomal protein S19"/>
    <property type="match status" value="1"/>
</dbReference>
<dbReference type="Gene3D" id="3.30.860.10">
    <property type="entry name" value="30s Ribosomal Protein S19, Chain A"/>
    <property type="match status" value="1"/>
</dbReference>
<dbReference type="HAMAP" id="MF_00531">
    <property type="entry name" value="Ribosomal_uS19"/>
    <property type="match status" value="1"/>
</dbReference>
<dbReference type="InterPro" id="IPR002222">
    <property type="entry name" value="Ribosomal_uS19"/>
</dbReference>
<dbReference type="InterPro" id="IPR005732">
    <property type="entry name" value="Ribosomal_uS19_bac-type"/>
</dbReference>
<dbReference type="InterPro" id="IPR020934">
    <property type="entry name" value="Ribosomal_uS19_CS"/>
</dbReference>
<dbReference type="InterPro" id="IPR023575">
    <property type="entry name" value="Ribosomal_uS19_SF"/>
</dbReference>
<dbReference type="NCBIfam" id="TIGR01050">
    <property type="entry name" value="rpsS_bact"/>
    <property type="match status" value="1"/>
</dbReference>
<dbReference type="PANTHER" id="PTHR11880">
    <property type="entry name" value="RIBOSOMAL PROTEIN S19P FAMILY MEMBER"/>
    <property type="match status" value="1"/>
</dbReference>
<dbReference type="PANTHER" id="PTHR11880:SF8">
    <property type="entry name" value="SMALL RIBOSOMAL SUBUNIT PROTEIN US19M"/>
    <property type="match status" value="1"/>
</dbReference>
<dbReference type="Pfam" id="PF00203">
    <property type="entry name" value="Ribosomal_S19"/>
    <property type="match status" value="1"/>
</dbReference>
<dbReference type="PIRSF" id="PIRSF002144">
    <property type="entry name" value="Ribosomal_S19"/>
    <property type="match status" value="1"/>
</dbReference>
<dbReference type="PRINTS" id="PR00975">
    <property type="entry name" value="RIBOSOMALS19"/>
</dbReference>
<dbReference type="SUPFAM" id="SSF54570">
    <property type="entry name" value="Ribosomal protein S19"/>
    <property type="match status" value="1"/>
</dbReference>
<dbReference type="PROSITE" id="PS00323">
    <property type="entry name" value="RIBOSOMAL_S19"/>
    <property type="match status" value="1"/>
</dbReference>
<comment type="function">
    <text evidence="1">Protein S19 forms a complex with S13 that binds strongly to the 16S ribosomal RNA.</text>
</comment>
<comment type="similarity">
    <text evidence="1">Belongs to the universal ribosomal protein uS19 family.</text>
</comment>
<sequence length="95" mass="10792">MGRSSKKGPYVDKKLLEKIRKLNETGEKKVIKTWSRASMIIPEMVGHTIAVYNGMKHIPVYITENMIGHRLGEFAPTRRFGGHADKKAKKGELKK</sequence>
<organism>
    <name type="scientific">Thermotoga sp. (strain RQ2)</name>
    <dbReference type="NCBI Taxonomy" id="126740"/>
    <lineage>
        <taxon>Bacteria</taxon>
        <taxon>Thermotogati</taxon>
        <taxon>Thermotogota</taxon>
        <taxon>Thermotogae</taxon>
        <taxon>Thermotogales</taxon>
        <taxon>Thermotogaceae</taxon>
        <taxon>Thermotoga</taxon>
    </lineage>
</organism>